<organismHost>
    <name type="scientific">Bos taurus</name>
    <name type="common">Bovine</name>
    <dbReference type="NCBI Taxonomy" id="9913"/>
</organismHost>
<name>VP7_ROTBN</name>
<dbReference type="EMBL" id="M12394">
    <property type="protein sequence ID" value="AAA47325.1"/>
    <property type="molecule type" value="Genomic_RNA"/>
</dbReference>
<dbReference type="SMR" id="P04511"/>
<dbReference type="GO" id="GO:0044166">
    <property type="term" value="C:host cell endoplasmic reticulum lumen"/>
    <property type="evidence" value="ECO:0007669"/>
    <property type="project" value="UniProtKB-SubCell"/>
</dbReference>
<dbReference type="GO" id="GO:0039621">
    <property type="term" value="C:T=13 icosahedral viral capsid"/>
    <property type="evidence" value="ECO:0007669"/>
    <property type="project" value="UniProtKB-UniRule"/>
</dbReference>
<dbReference type="GO" id="GO:0039624">
    <property type="term" value="C:viral outer capsid"/>
    <property type="evidence" value="ECO:0007669"/>
    <property type="project" value="UniProtKB-UniRule"/>
</dbReference>
<dbReference type="GO" id="GO:0046872">
    <property type="term" value="F:metal ion binding"/>
    <property type="evidence" value="ECO:0007669"/>
    <property type="project" value="UniProtKB-KW"/>
</dbReference>
<dbReference type="Gene3D" id="3.40.50.11130">
    <property type="entry name" value="Glycoprotein VP7, domain 1"/>
    <property type="match status" value="1"/>
</dbReference>
<dbReference type="Gene3D" id="2.60.120.800">
    <property type="entry name" value="Rotavirus outer-layer protein VP7, domain 2"/>
    <property type="match status" value="1"/>
</dbReference>
<dbReference type="HAMAP" id="MF_04130">
    <property type="entry name" value="Rota_VP7"/>
    <property type="match status" value="1"/>
</dbReference>
<dbReference type="HAMAP" id="MF_04131">
    <property type="entry name" value="Rota_VP7_A"/>
    <property type="match status" value="1"/>
</dbReference>
<dbReference type="InterPro" id="IPR001963">
    <property type="entry name" value="VP7"/>
</dbReference>
<dbReference type="InterPro" id="IPR042207">
    <property type="entry name" value="VP7_1"/>
</dbReference>
<dbReference type="InterPro" id="IPR042210">
    <property type="entry name" value="VP7_2"/>
</dbReference>
<dbReference type="Pfam" id="PF00434">
    <property type="entry name" value="VP7"/>
    <property type="match status" value="1"/>
</dbReference>
<keyword id="KW-0024">Alternative initiation</keyword>
<keyword id="KW-0106">Calcium</keyword>
<keyword id="KW-0167">Capsid protein</keyword>
<keyword id="KW-1015">Disulfide bond</keyword>
<keyword id="KW-0325">Glycoprotein</keyword>
<keyword id="KW-1038">Host endoplasmic reticulum</keyword>
<keyword id="KW-0945">Host-virus interaction</keyword>
<keyword id="KW-0479">Metal-binding</keyword>
<keyword id="KW-1152">Outer capsid protein</keyword>
<keyword id="KW-0732">Signal</keyword>
<keyword id="KW-1146">T=13 icosahedral capsid protein</keyword>
<keyword id="KW-0946">Virion</keyword>
<accession>P04511</accession>
<proteinExistence type="inferred from homology"/>
<sequence length="326" mass="37087">MYGIEYTTILIFLTSITLLNYILKSITRMMDYIIYRFLLIVVILATIINAQNYGVNLPITGSMDTAYADSTQSEPFLTSTLCLYYPVEASNEIADTEWKDTLSQLFLTKGWPTGSVYLKEYADIAAFSVEPQLYCDYNLVLMKYDSTQELDMSELADLILNEWLCNPMDITLYYYQQTDEANKWISTGSSCTVKVCPLNTQTLGIGCLITNPDTFETVATMEKLVITDVVDGVNHKLNVTTATCTIRNCKKLGPRENVAVIQVGGANVLDITADPTTTPQTERMMRINWKKWWQVFYTVVDYVNQIIQTMSKRSRSLNSSAFYYRV</sequence>
<protein>
    <recommendedName>
        <fullName evidence="2">Outer capsid glycoprotein VP7</fullName>
    </recommendedName>
</protein>
<feature type="signal peptide" evidence="2">
    <location>
        <begin position="1"/>
        <end position="50"/>
    </location>
</feature>
<feature type="chain" id="PRO_0000149585" description="Outer capsid glycoprotein VP7" evidence="2">
    <location>
        <begin position="51"/>
        <end position="326"/>
    </location>
</feature>
<feature type="region of interest" description="CNP motif; interaction with ITGAV/ITGB3" evidence="2">
    <location>
        <begin position="165"/>
        <end position="167"/>
    </location>
</feature>
<feature type="region of interest" description="GPR motif; interaction with ITGAX/ITGB2" evidence="2">
    <location>
        <begin position="253"/>
        <end position="255"/>
    </location>
</feature>
<feature type="binding site" evidence="2">
    <location>
        <position position="95"/>
    </location>
    <ligand>
        <name>Ca(2+)</name>
        <dbReference type="ChEBI" id="CHEBI:29108"/>
        <label>1</label>
    </ligand>
</feature>
<feature type="binding site" evidence="2">
    <location>
        <position position="177"/>
    </location>
    <ligand>
        <name>Ca(2+)</name>
        <dbReference type="ChEBI" id="CHEBI:29108"/>
        <label>2</label>
    </ligand>
</feature>
<feature type="binding site" evidence="2">
    <location>
        <position position="206"/>
    </location>
    <ligand>
        <name>Ca(2+)</name>
        <dbReference type="ChEBI" id="CHEBI:29108"/>
        <label>1</label>
    </ligand>
</feature>
<feature type="binding site" evidence="2">
    <location>
        <position position="214"/>
    </location>
    <ligand>
        <name>Ca(2+)</name>
        <dbReference type="ChEBI" id="CHEBI:29108"/>
        <label>1</label>
    </ligand>
</feature>
<feature type="binding site" evidence="2">
    <location>
        <position position="216"/>
    </location>
    <ligand>
        <name>Ca(2+)</name>
        <dbReference type="ChEBI" id="CHEBI:29108"/>
        <label>1</label>
    </ligand>
</feature>
<feature type="binding site" evidence="2">
    <location>
        <position position="228"/>
    </location>
    <ligand>
        <name>Ca(2+)</name>
        <dbReference type="ChEBI" id="CHEBI:29108"/>
        <label>2</label>
    </ligand>
</feature>
<feature type="binding site" evidence="2">
    <location>
        <position position="229"/>
    </location>
    <ligand>
        <name>Ca(2+)</name>
        <dbReference type="ChEBI" id="CHEBI:29108"/>
        <label>2</label>
    </ligand>
</feature>
<feature type="binding site" evidence="2">
    <location>
        <position position="231"/>
    </location>
    <ligand>
        <name>Ca(2+)</name>
        <dbReference type="ChEBI" id="CHEBI:29108"/>
        <label>2</label>
    </ligand>
</feature>
<feature type="binding site" evidence="2">
    <location>
        <position position="301"/>
    </location>
    <ligand>
        <name>Ca(2+)</name>
        <dbReference type="ChEBI" id="CHEBI:29108"/>
        <label>2</label>
    </ligand>
</feature>
<feature type="glycosylation site" description="N-linked (GlcNAc...) asparagine; by host" evidence="1">
    <location>
        <position position="238"/>
    </location>
</feature>
<feature type="glycosylation site" description="N-linked (GlcNAc...) asparagine; by host" evidence="1">
    <location>
        <position position="318"/>
    </location>
</feature>
<feature type="disulfide bond" evidence="2">
    <location>
        <begin position="82"/>
        <end position="135"/>
    </location>
</feature>
<feature type="disulfide bond" evidence="2">
    <location>
        <begin position="165"/>
        <end position="249"/>
    </location>
</feature>
<feature type="disulfide bond" evidence="2">
    <location>
        <begin position="191"/>
        <end position="244"/>
    </location>
</feature>
<feature type="disulfide bond" evidence="2">
    <location>
        <begin position="196"/>
        <end position="207"/>
    </location>
</feature>
<feature type="splice variant" id="VSP_038614" description="In isoform 2." evidence="3">
    <location>
        <begin position="1"/>
        <end position="29"/>
    </location>
</feature>
<reference key="1">
    <citation type="journal article" date="1985" name="Virology">
        <title>Nucleotide sequence of the structural glycoprotein VP7 gene of Nebraska calf diarrhea virus rotavirus: comparison with homologous genes from four strains of human and animal rotaviruses.</title>
        <authorList>
            <person name="Glass R.I."/>
            <person name="Keith J."/>
            <person name="Nakagomi O."/>
            <person name="Nakagomi T."/>
            <person name="Askaa J."/>
            <person name="Kapikian A.Z."/>
            <person name="Chanock R.M."/>
            <person name="Flores J."/>
        </authorList>
    </citation>
    <scope>NUCLEOTIDE SEQUENCE [GENOMIC RNA]</scope>
</reference>
<evidence type="ECO:0000255" key="1"/>
<evidence type="ECO:0000255" key="2">
    <source>
        <dbReference type="HAMAP-Rule" id="MF_04131"/>
    </source>
</evidence>
<evidence type="ECO:0000305" key="3"/>
<organism>
    <name type="scientific">Rotavirus A (strain RVA/Cow/United States/NCDV-Lincoln/1969/G6P6[1])</name>
    <name type="common">RV-A</name>
    <name type="synonym">Rotavirus A (strain Nebraska calf diarrhea virus)</name>
    <dbReference type="NCBI Taxonomy" id="36439"/>
    <lineage>
        <taxon>Viruses</taxon>
        <taxon>Riboviria</taxon>
        <taxon>Orthornavirae</taxon>
        <taxon>Duplornaviricota</taxon>
        <taxon>Resentoviricetes</taxon>
        <taxon>Reovirales</taxon>
        <taxon>Sedoreoviridae</taxon>
        <taxon>Rotavirus</taxon>
        <taxon>Rotavirus A</taxon>
    </lineage>
</organism>
<comment type="function">
    <text evidence="2">Calcium-binding protein that interacts with rotavirus cell receptors once the initial attachment by VP4 has been achieved. Rotavirus attachment and entry into the host cell probably involves multiple sequential contacts between the outer capsid proteins VP4 and VP7, and the cell receptors. Following entry into the host cell, low intracellular or intravesicular Ca(2+) concentration probably causes the calcium-stabilized VP7 trimers to dissociate from the virion. This step is probably necessary for the membrane-disrupting entry step and the release of VP4, which is locked onto the virion by VP7.</text>
</comment>
<comment type="subunit">
    <text evidence="2">Homotrimer; disulfide-linked. 2 Ca(2+) ions bound at each subunit interface in the trimer hold the trimer together. Interacts with the intermediate capsid protein VP6. Interacts with the outer capsid protein VP5*.</text>
</comment>
<comment type="subcellular location">
    <subcellularLocation>
        <location evidence="2">Virion</location>
    </subcellularLocation>
    <subcellularLocation>
        <location evidence="2">Host endoplasmic reticulum lumen</location>
    </subcellularLocation>
    <text evidence="2">The outer layer contains 780 copies of VP7, grouped as 260 trimers. Immature double-layered particles assembled in the cytoplasm bud across the membrane of the endoplasmic reticulum, acquiring during this process a transient lipid membrane that is modified with the ER resident viral glycoproteins NSP4 and VP7; these enveloped particles also contain VP4. As the particles move towards the interior of the ER cisternae, the transient lipid membrane and the non-structural protein NSP4 are lost, while the virus surface proteins VP4 and VP7 rearrange to form the outermost virus protein layer, yielding mature infectious triple-layered particles.</text>
</comment>
<comment type="alternative products">
    <event type="alternative initiation"/>
    <isoform>
        <id>P04511-1</id>
        <name>1</name>
        <sequence type="displayed"/>
    </isoform>
    <isoform>
        <id>P04511-2</id>
        <name>2</name>
        <sequence type="described" ref="VSP_038614"/>
    </isoform>
</comment>
<comment type="PTM">
    <text evidence="2">N-glycosylated.</text>
</comment>
<comment type="PTM">
    <text evidence="2">The N-terminus is blocked possibly by pyroglutamic acid.</text>
</comment>
<comment type="miscellaneous">
    <text evidence="2">Some rotavirus strains are neuraminidase-sensitive and require sialic acid to attach to the cell surface. Some rotavirus strains are integrin-dependent. Some rotavirus strains depend on ganglioside for their entry into the host cell. Hsp70 also seems to be involved in the entry of some strains.</text>
</comment>
<comment type="miscellaneous">
    <text evidence="2">In group A rotaviruses, VP7 defines the G serotype.</text>
</comment>
<comment type="miscellaneous">
    <molecule>Isoform 2</molecule>
    <text evidence="3">Produced by alternative initiation at Met-30 of isoform 1.</text>
</comment>
<comment type="similarity">
    <text evidence="2">Belongs to the rotavirus VP7 family.</text>
</comment>